<accession>Q8XE10</accession>
<gene>
    <name evidence="1" type="primary">chbG</name>
    <name type="ordered locus">Z2763</name>
    <name type="ordered locus">ECs2439</name>
</gene>
<comment type="function">
    <text evidence="1">Involved in the degradation of chitin. ChbG is essential for growth on the acetylated chitooligosaccharides chitobiose and chitotriose but is dispensable for growth on cellobiose and chitosan dimer, the deacetylated form of chitobiose. Deacetylation of chitobiose-6-P and chitotriose-6-P is necessary for both the activation of the chb promoter by the regulatory protein ChbR and the hydrolysis of phosphorylated beta-glucosides by the phospho-beta-glucosidase ChbF. Catalyzes the removal of only one acetyl group from chitobiose-6-P to yield monoacetylchitobiose-6-P, the inducer of ChbR and the substrate of ChbF.</text>
</comment>
<comment type="catalytic activity">
    <reaction evidence="1">
        <text>N,N'-diacetylchitobiose + H2O = N-acetyl-beta-D-glucosaminyl-(1-&gt;4)-D-glucosamine + acetate</text>
        <dbReference type="Rhea" id="RHEA:27469"/>
        <dbReference type="ChEBI" id="CHEBI:15377"/>
        <dbReference type="ChEBI" id="CHEBI:28681"/>
        <dbReference type="ChEBI" id="CHEBI:30089"/>
        <dbReference type="ChEBI" id="CHEBI:59910"/>
        <dbReference type="EC" id="3.5.1.105"/>
    </reaction>
</comment>
<comment type="catalytic activity">
    <reaction evidence="1">
        <text>diacetylchitobiose-6'-phosphate + H2O = N'-monoacetylchitobiose-6'-phosphate + acetate</text>
        <dbReference type="Rhea" id="RHEA:35083"/>
        <dbReference type="ChEBI" id="CHEBI:15377"/>
        <dbReference type="ChEBI" id="CHEBI:30089"/>
        <dbReference type="ChEBI" id="CHEBI:64883"/>
        <dbReference type="ChEBI" id="CHEBI:71315"/>
    </reaction>
</comment>
<comment type="cofactor">
    <cofactor evidence="1">
        <name>Mg(2+)</name>
        <dbReference type="ChEBI" id="CHEBI:18420"/>
    </cofactor>
</comment>
<comment type="pathway">
    <text evidence="1">Glycan degradation; chitin degradation.</text>
</comment>
<comment type="subunit">
    <text evidence="1">Homodimer.</text>
</comment>
<comment type="subcellular location">
    <subcellularLocation>
        <location evidence="1">Cytoplasm</location>
    </subcellularLocation>
</comment>
<comment type="similarity">
    <text evidence="1">Belongs to the YdjC deacetylase family. ChbG subfamily.</text>
</comment>
<dbReference type="EC" id="3.5.1.105" evidence="1"/>
<dbReference type="EMBL" id="AE005174">
    <property type="protein sequence ID" value="AAG56719.1"/>
    <property type="molecule type" value="Genomic_DNA"/>
</dbReference>
<dbReference type="EMBL" id="BA000007">
    <property type="protein sequence ID" value="BAB35862.1"/>
    <property type="molecule type" value="Genomic_DNA"/>
</dbReference>
<dbReference type="PIR" id="C85782">
    <property type="entry name" value="C85782"/>
</dbReference>
<dbReference type="PIR" id="G90933">
    <property type="entry name" value="G90933"/>
</dbReference>
<dbReference type="RefSeq" id="NP_310466.1">
    <property type="nucleotide sequence ID" value="NC_002695.1"/>
</dbReference>
<dbReference type="RefSeq" id="WP_000440480.1">
    <property type="nucleotide sequence ID" value="NZ_VOAI01000007.1"/>
</dbReference>
<dbReference type="SMR" id="Q8XE10"/>
<dbReference type="STRING" id="155864.Z2763"/>
<dbReference type="GeneID" id="914120"/>
<dbReference type="KEGG" id="ece:Z2763"/>
<dbReference type="KEGG" id="ecs:ECs_2439"/>
<dbReference type="PATRIC" id="fig|386585.9.peg.2553"/>
<dbReference type="eggNOG" id="COG3394">
    <property type="taxonomic scope" value="Bacteria"/>
</dbReference>
<dbReference type="HOGENOM" id="CLU_064244_4_1_6"/>
<dbReference type="OMA" id="DHIDSHH"/>
<dbReference type="UniPathway" id="UPA00349"/>
<dbReference type="Proteomes" id="UP000000558">
    <property type="component" value="Chromosome"/>
</dbReference>
<dbReference type="Proteomes" id="UP000002519">
    <property type="component" value="Chromosome"/>
</dbReference>
<dbReference type="GO" id="GO:0005737">
    <property type="term" value="C:cytoplasm"/>
    <property type="evidence" value="ECO:0007669"/>
    <property type="project" value="UniProtKB-SubCell"/>
</dbReference>
<dbReference type="GO" id="GO:0036311">
    <property type="term" value="F:chitin disaccharide deacetylase activity"/>
    <property type="evidence" value="ECO:0007669"/>
    <property type="project" value="UniProtKB-UniRule"/>
</dbReference>
<dbReference type="GO" id="GO:0019213">
    <property type="term" value="F:deacetylase activity"/>
    <property type="evidence" value="ECO:0007669"/>
    <property type="project" value="TreeGrafter"/>
</dbReference>
<dbReference type="GO" id="GO:0046872">
    <property type="term" value="F:metal ion binding"/>
    <property type="evidence" value="ECO:0007669"/>
    <property type="project" value="UniProtKB-KW"/>
</dbReference>
<dbReference type="GO" id="GO:0006032">
    <property type="term" value="P:chitin catabolic process"/>
    <property type="evidence" value="ECO:0007669"/>
    <property type="project" value="UniProtKB-UniPathway"/>
</dbReference>
<dbReference type="GO" id="GO:0052777">
    <property type="term" value="P:diacetylchitobiose catabolic process"/>
    <property type="evidence" value="ECO:0007669"/>
    <property type="project" value="UniProtKB-UniRule"/>
</dbReference>
<dbReference type="GO" id="GO:0000272">
    <property type="term" value="P:polysaccharide catabolic process"/>
    <property type="evidence" value="ECO:0007669"/>
    <property type="project" value="UniProtKB-UniRule"/>
</dbReference>
<dbReference type="CDD" id="cd10803">
    <property type="entry name" value="YdjC_EF3048_like"/>
    <property type="match status" value="1"/>
</dbReference>
<dbReference type="FunFam" id="3.20.20.370:FF:000001">
    <property type="entry name" value="Chitooligosaccharide deacetylase"/>
    <property type="match status" value="1"/>
</dbReference>
<dbReference type="Gene3D" id="3.20.20.370">
    <property type="entry name" value="Glycoside hydrolase/deacetylase"/>
    <property type="match status" value="1"/>
</dbReference>
<dbReference type="HAMAP" id="MF_01246">
    <property type="entry name" value="COD"/>
    <property type="match status" value="1"/>
</dbReference>
<dbReference type="InterPro" id="IPR022948">
    <property type="entry name" value="COD_ChbG_bac"/>
</dbReference>
<dbReference type="InterPro" id="IPR011330">
    <property type="entry name" value="Glyco_hydro/deAcase_b/a-brl"/>
</dbReference>
<dbReference type="InterPro" id="IPR006879">
    <property type="entry name" value="YdjC-like"/>
</dbReference>
<dbReference type="NCBIfam" id="NF002559">
    <property type="entry name" value="PRK02134.1"/>
    <property type="match status" value="1"/>
</dbReference>
<dbReference type="PANTHER" id="PTHR31609:SF1">
    <property type="entry name" value="CARBOHYDRATE DEACETYLASE"/>
    <property type="match status" value="1"/>
</dbReference>
<dbReference type="PANTHER" id="PTHR31609">
    <property type="entry name" value="YDJC DEACETYLASE FAMILY MEMBER"/>
    <property type="match status" value="1"/>
</dbReference>
<dbReference type="Pfam" id="PF04794">
    <property type="entry name" value="YdjC"/>
    <property type="match status" value="1"/>
</dbReference>
<dbReference type="SUPFAM" id="SSF88713">
    <property type="entry name" value="Glycoside hydrolase/deacetylase"/>
    <property type="match status" value="1"/>
</dbReference>
<name>CHBG_ECO57</name>
<keyword id="KW-0119">Carbohydrate metabolism</keyword>
<keyword id="KW-0146">Chitin degradation</keyword>
<keyword id="KW-0963">Cytoplasm</keyword>
<keyword id="KW-0378">Hydrolase</keyword>
<keyword id="KW-0460">Magnesium</keyword>
<keyword id="KW-0479">Metal-binding</keyword>
<keyword id="KW-0624">Polysaccharide degradation</keyword>
<keyword id="KW-1185">Reference proteome</keyword>
<organism>
    <name type="scientific">Escherichia coli O157:H7</name>
    <dbReference type="NCBI Taxonomy" id="83334"/>
    <lineage>
        <taxon>Bacteria</taxon>
        <taxon>Pseudomonadati</taxon>
        <taxon>Pseudomonadota</taxon>
        <taxon>Gammaproteobacteria</taxon>
        <taxon>Enterobacterales</taxon>
        <taxon>Enterobacteriaceae</taxon>
        <taxon>Escherichia</taxon>
    </lineage>
</organism>
<protein>
    <recommendedName>
        <fullName evidence="1">Chitooligosaccharide deacetylase</fullName>
        <shortName evidence="1">COD</shortName>
        <ecNumber evidence="1">3.5.1.105</ecNumber>
    </recommendedName>
    <alternativeName>
        <fullName evidence="1">Chitin disaccharide deacetylase</fullName>
    </alternativeName>
    <alternativeName>
        <fullName evidence="1">Chitobiose deacetylase</fullName>
    </alternativeName>
    <alternativeName>
        <fullName evidence="1">Chitobiose-6P deacetylase</fullName>
    </alternativeName>
    <alternativeName>
        <fullName evidence="1">Chitotriose deacetylase</fullName>
    </alternativeName>
    <alternativeName>
        <fullName evidence="1">Chitotriose-6P deacetylase</fullName>
    </alternativeName>
</protein>
<feature type="chain" id="PRO_0000051591" description="Chitooligosaccharide deacetylase">
    <location>
        <begin position="1"/>
        <end position="252"/>
    </location>
</feature>
<feature type="binding site" evidence="1">
    <location>
        <position position="125"/>
    </location>
    <ligand>
        <name>Mg(2+)</name>
        <dbReference type="ChEBI" id="CHEBI:18420"/>
    </ligand>
</feature>
<sequence length="252" mass="28017">MERLLIVNADDFGLSKGQNYGIIEACRNGIVTSTTALVNGQAIDHAVQLSRDEPSLAIGMNFVLTMGKPLTAMPGLTRDGVLGKWIWQLAEEDALPLEEITQELASQYLRFIELFGRKPTHLDSHHHVHMFPQIFPIVARFAAEEGIALRIDRQPLSNAGDLPANLRSSHGFSSAFYGEEISEALFLQVLDDSSHRGERSLEVMCHPAFVDNTIRQSAYCFPRLTELEVLTSASLKYAIAERGYRLGSYLDV</sequence>
<proteinExistence type="inferred from homology"/>
<evidence type="ECO:0000255" key="1">
    <source>
        <dbReference type="HAMAP-Rule" id="MF_01246"/>
    </source>
</evidence>
<reference key="1">
    <citation type="journal article" date="2001" name="Nature">
        <title>Genome sequence of enterohaemorrhagic Escherichia coli O157:H7.</title>
        <authorList>
            <person name="Perna N.T."/>
            <person name="Plunkett G. III"/>
            <person name="Burland V."/>
            <person name="Mau B."/>
            <person name="Glasner J.D."/>
            <person name="Rose D.J."/>
            <person name="Mayhew G.F."/>
            <person name="Evans P.S."/>
            <person name="Gregor J."/>
            <person name="Kirkpatrick H.A."/>
            <person name="Posfai G."/>
            <person name="Hackett J."/>
            <person name="Klink S."/>
            <person name="Boutin A."/>
            <person name="Shao Y."/>
            <person name="Miller L."/>
            <person name="Grotbeck E.J."/>
            <person name="Davis N.W."/>
            <person name="Lim A."/>
            <person name="Dimalanta E.T."/>
            <person name="Potamousis K."/>
            <person name="Apodaca J."/>
            <person name="Anantharaman T.S."/>
            <person name="Lin J."/>
            <person name="Yen G."/>
            <person name="Schwartz D.C."/>
            <person name="Welch R.A."/>
            <person name="Blattner F.R."/>
        </authorList>
    </citation>
    <scope>NUCLEOTIDE SEQUENCE [LARGE SCALE GENOMIC DNA]</scope>
    <source>
        <strain>O157:H7 / EDL933 / ATCC 700927 / EHEC</strain>
    </source>
</reference>
<reference key="2">
    <citation type="journal article" date="2001" name="DNA Res.">
        <title>Complete genome sequence of enterohemorrhagic Escherichia coli O157:H7 and genomic comparison with a laboratory strain K-12.</title>
        <authorList>
            <person name="Hayashi T."/>
            <person name="Makino K."/>
            <person name="Ohnishi M."/>
            <person name="Kurokawa K."/>
            <person name="Ishii K."/>
            <person name="Yokoyama K."/>
            <person name="Han C.-G."/>
            <person name="Ohtsubo E."/>
            <person name="Nakayama K."/>
            <person name="Murata T."/>
            <person name="Tanaka M."/>
            <person name="Tobe T."/>
            <person name="Iida T."/>
            <person name="Takami H."/>
            <person name="Honda T."/>
            <person name="Sasakawa C."/>
            <person name="Ogasawara N."/>
            <person name="Yasunaga T."/>
            <person name="Kuhara S."/>
            <person name="Shiba T."/>
            <person name="Hattori M."/>
            <person name="Shinagawa H."/>
        </authorList>
    </citation>
    <scope>NUCLEOTIDE SEQUENCE [LARGE SCALE GENOMIC DNA]</scope>
    <source>
        <strain>O157:H7 / Sakai / RIMD 0509952 / EHEC</strain>
    </source>
</reference>